<evidence type="ECO:0000255" key="1">
    <source>
        <dbReference type="HAMAP-Rule" id="MF_00347"/>
    </source>
</evidence>
<feature type="chain" id="PRO_1000079362" description="Polyphosphate kinase">
    <location>
        <begin position="1"/>
        <end position="694"/>
    </location>
</feature>
<feature type="active site" description="Phosphohistidine intermediate" evidence="1">
    <location>
        <position position="427"/>
    </location>
</feature>
<feature type="binding site" evidence="1">
    <location>
        <position position="45"/>
    </location>
    <ligand>
        <name>ATP</name>
        <dbReference type="ChEBI" id="CHEBI:30616"/>
    </ligand>
</feature>
<feature type="binding site" evidence="1">
    <location>
        <position position="367"/>
    </location>
    <ligand>
        <name>Mg(2+)</name>
        <dbReference type="ChEBI" id="CHEBI:18420"/>
    </ligand>
</feature>
<feature type="binding site" evidence="1">
    <location>
        <position position="397"/>
    </location>
    <ligand>
        <name>Mg(2+)</name>
        <dbReference type="ChEBI" id="CHEBI:18420"/>
    </ligand>
</feature>
<feature type="binding site" evidence="1">
    <location>
        <position position="460"/>
    </location>
    <ligand>
        <name>ATP</name>
        <dbReference type="ChEBI" id="CHEBI:30616"/>
    </ligand>
</feature>
<feature type="binding site" evidence="1">
    <location>
        <position position="553"/>
    </location>
    <ligand>
        <name>ATP</name>
        <dbReference type="ChEBI" id="CHEBI:30616"/>
    </ligand>
</feature>
<feature type="binding site" evidence="1">
    <location>
        <position position="580"/>
    </location>
    <ligand>
        <name>ATP</name>
        <dbReference type="ChEBI" id="CHEBI:30616"/>
    </ligand>
</feature>
<sequence>MQTSPDMFINRELSWLRFNSRVLDQCSKNLPLLEKLKFIAIYCTNLDEFYMIRVAGLKQLFSAGVNASSSDEMTPLQQLKAIRKYLHQEKELLERYFNEITSELEKENLFIKHYENLDENLKQKCDEYFFSNIFPVIVPIAVDATHPFPHLNNLSFSLAVKICDKAHPELVKFGMIRIPRVLPRFYEVSANIYVPIESIVHQHAEEIFPGYKLLASAAFRVTRNADMVIEEEEADDFMMILEQGLKLRRKGAFVRLQIQKDADEQIVEFLNTHMKIFHKDVYEYSILLNLPSLWQIAGNKTFTHLLSPLYTPKTLPPFDENLSIFDAVEKEDILIIQPFESFDPVYKFIKEASKDPEVISIRMTLYRVEKNSNIVQALIDAASDGKQVTVMVELKARFDEENNLHWAKALENAGAHVIYGITGFKVHAKVSQVIRKQGDKLKFYMHLSTGNYNASSAKIYTDVSYFTSKAEFARDTTSFFHILSGFSKNRRLQTLSMSPNQIKEKVLEMIRIETSKKNEGVIVAKMNSLVDSDIIQALYEASMEGVQIDLIIRGICCLKPDEEYSKNIRVRSIIGKYLEHARVFYFKHSEPNYFISSADWMPRNLERRLELMTPIYDERSKAKLAQFLRLQLSDNVLAYKLKNNGEYEKIPSSEKIIDSQQTLEEYVSKIYKTLKKDTDQSRATHLASKLFKEN</sequence>
<keyword id="KW-0067">ATP-binding</keyword>
<keyword id="KW-0418">Kinase</keyword>
<keyword id="KW-0460">Magnesium</keyword>
<keyword id="KW-0479">Metal-binding</keyword>
<keyword id="KW-0547">Nucleotide-binding</keyword>
<keyword id="KW-0597">Phosphoprotein</keyword>
<keyword id="KW-0808">Transferase</keyword>
<protein>
    <recommendedName>
        <fullName evidence="1">Polyphosphate kinase</fullName>
        <ecNumber evidence="1">2.7.4.1</ecNumber>
    </recommendedName>
    <alternativeName>
        <fullName evidence="1">ATP-polyphosphate phosphotransferase</fullName>
    </alternativeName>
    <alternativeName>
        <fullName evidence="1">Polyphosphoric acid kinase</fullName>
    </alternativeName>
</protein>
<gene>
    <name evidence="1" type="primary">ppk</name>
    <name type="ordered locus">CJE1548</name>
</gene>
<reference key="1">
    <citation type="journal article" date="2005" name="PLoS Biol.">
        <title>Major structural differences and novel potential virulence mechanisms from the genomes of multiple Campylobacter species.</title>
        <authorList>
            <person name="Fouts D.E."/>
            <person name="Mongodin E.F."/>
            <person name="Mandrell R.E."/>
            <person name="Miller W.G."/>
            <person name="Rasko D.A."/>
            <person name="Ravel J."/>
            <person name="Brinkac L.M."/>
            <person name="DeBoy R.T."/>
            <person name="Parker C.T."/>
            <person name="Daugherty S.C."/>
            <person name="Dodson R.J."/>
            <person name="Durkin A.S."/>
            <person name="Madupu R."/>
            <person name="Sullivan S.A."/>
            <person name="Shetty J.U."/>
            <person name="Ayodeji M.A."/>
            <person name="Shvartsbeyn A."/>
            <person name="Schatz M.C."/>
            <person name="Badger J.H."/>
            <person name="Fraser C.M."/>
            <person name="Nelson K.E."/>
        </authorList>
    </citation>
    <scope>NUCLEOTIDE SEQUENCE [LARGE SCALE GENOMIC DNA]</scope>
    <source>
        <strain>RM1221</strain>
    </source>
</reference>
<comment type="function">
    <text evidence="1">Catalyzes the reversible transfer of the terminal phosphate of ATP to form a long-chain polyphosphate (polyP).</text>
</comment>
<comment type="catalytic activity">
    <reaction evidence="1">
        <text>[phosphate](n) + ATP = [phosphate](n+1) + ADP</text>
        <dbReference type="Rhea" id="RHEA:19573"/>
        <dbReference type="Rhea" id="RHEA-COMP:9859"/>
        <dbReference type="Rhea" id="RHEA-COMP:14280"/>
        <dbReference type="ChEBI" id="CHEBI:16838"/>
        <dbReference type="ChEBI" id="CHEBI:30616"/>
        <dbReference type="ChEBI" id="CHEBI:456216"/>
        <dbReference type="EC" id="2.7.4.1"/>
    </reaction>
</comment>
<comment type="cofactor">
    <cofactor evidence="1">
        <name>Mg(2+)</name>
        <dbReference type="ChEBI" id="CHEBI:18420"/>
    </cofactor>
</comment>
<comment type="PTM">
    <text evidence="1">An intermediate of this reaction is the autophosphorylated ppk in which a phosphate is covalently linked to a histidine residue through a N-P bond.</text>
</comment>
<comment type="similarity">
    <text evidence="1">Belongs to the polyphosphate kinase 1 (PPK1) family.</text>
</comment>
<proteinExistence type="inferred from homology"/>
<name>PPK1_CAMJR</name>
<organism>
    <name type="scientific">Campylobacter jejuni (strain RM1221)</name>
    <dbReference type="NCBI Taxonomy" id="195099"/>
    <lineage>
        <taxon>Bacteria</taxon>
        <taxon>Pseudomonadati</taxon>
        <taxon>Campylobacterota</taxon>
        <taxon>Epsilonproteobacteria</taxon>
        <taxon>Campylobacterales</taxon>
        <taxon>Campylobacteraceae</taxon>
        <taxon>Campylobacter</taxon>
    </lineage>
</organism>
<dbReference type="EC" id="2.7.4.1" evidence="1"/>
<dbReference type="EMBL" id="CP000025">
    <property type="protein sequence ID" value="AAW35984.1"/>
    <property type="molecule type" value="Genomic_DNA"/>
</dbReference>
<dbReference type="SMR" id="Q5HT53"/>
<dbReference type="KEGG" id="cjr:CJE1548"/>
<dbReference type="HOGENOM" id="CLU_009678_1_1_7"/>
<dbReference type="GO" id="GO:0009358">
    <property type="term" value="C:polyphosphate kinase complex"/>
    <property type="evidence" value="ECO:0007669"/>
    <property type="project" value="InterPro"/>
</dbReference>
<dbReference type="GO" id="GO:0005524">
    <property type="term" value="F:ATP binding"/>
    <property type="evidence" value="ECO:0007669"/>
    <property type="project" value="UniProtKB-KW"/>
</dbReference>
<dbReference type="GO" id="GO:0046872">
    <property type="term" value="F:metal ion binding"/>
    <property type="evidence" value="ECO:0007669"/>
    <property type="project" value="UniProtKB-KW"/>
</dbReference>
<dbReference type="GO" id="GO:0008976">
    <property type="term" value="F:polyphosphate kinase activity"/>
    <property type="evidence" value="ECO:0007669"/>
    <property type="project" value="UniProtKB-UniRule"/>
</dbReference>
<dbReference type="GO" id="GO:0006799">
    <property type="term" value="P:polyphosphate biosynthetic process"/>
    <property type="evidence" value="ECO:0007669"/>
    <property type="project" value="UniProtKB-UniRule"/>
</dbReference>
<dbReference type="CDD" id="cd09165">
    <property type="entry name" value="PLDc_PaPPK1_C1_like"/>
    <property type="match status" value="1"/>
</dbReference>
<dbReference type="CDD" id="cd09168">
    <property type="entry name" value="PLDc_PaPPK1_C2_like"/>
    <property type="match status" value="1"/>
</dbReference>
<dbReference type="Gene3D" id="3.30.870.10">
    <property type="entry name" value="Endonuclease Chain A"/>
    <property type="match status" value="2"/>
</dbReference>
<dbReference type="Gene3D" id="3.30.1840.10">
    <property type="entry name" value="Polyphosphate kinase middle domain"/>
    <property type="match status" value="1"/>
</dbReference>
<dbReference type="Gene3D" id="1.20.58.310">
    <property type="entry name" value="Polyphosphate kinase N-terminal domain"/>
    <property type="match status" value="1"/>
</dbReference>
<dbReference type="HAMAP" id="MF_00347">
    <property type="entry name" value="Polyphosphate_kinase"/>
    <property type="match status" value="1"/>
</dbReference>
<dbReference type="InterPro" id="IPR003414">
    <property type="entry name" value="PP_kinase"/>
</dbReference>
<dbReference type="InterPro" id="IPR041108">
    <property type="entry name" value="PP_kinase_C_1"/>
</dbReference>
<dbReference type="InterPro" id="IPR024953">
    <property type="entry name" value="PP_kinase_middle"/>
</dbReference>
<dbReference type="InterPro" id="IPR036830">
    <property type="entry name" value="PP_kinase_middle_dom_sf"/>
</dbReference>
<dbReference type="InterPro" id="IPR025200">
    <property type="entry name" value="PPK_C_dom2"/>
</dbReference>
<dbReference type="InterPro" id="IPR025198">
    <property type="entry name" value="PPK_N_dom"/>
</dbReference>
<dbReference type="InterPro" id="IPR036832">
    <property type="entry name" value="PPK_N_dom_sf"/>
</dbReference>
<dbReference type="NCBIfam" id="TIGR03705">
    <property type="entry name" value="poly_P_kin"/>
    <property type="match status" value="1"/>
</dbReference>
<dbReference type="NCBIfam" id="NF003921">
    <property type="entry name" value="PRK05443.2-2"/>
    <property type="match status" value="1"/>
</dbReference>
<dbReference type="NCBIfam" id="NF003924">
    <property type="entry name" value="PRK05443.3-2"/>
    <property type="match status" value="1"/>
</dbReference>
<dbReference type="PANTHER" id="PTHR30218">
    <property type="entry name" value="POLYPHOSPHATE KINASE"/>
    <property type="match status" value="1"/>
</dbReference>
<dbReference type="PANTHER" id="PTHR30218:SF0">
    <property type="entry name" value="POLYPHOSPHATE KINASE"/>
    <property type="match status" value="1"/>
</dbReference>
<dbReference type="Pfam" id="PF02503">
    <property type="entry name" value="PP_kinase"/>
    <property type="match status" value="1"/>
</dbReference>
<dbReference type="Pfam" id="PF13090">
    <property type="entry name" value="PP_kinase_C"/>
    <property type="match status" value="1"/>
</dbReference>
<dbReference type="Pfam" id="PF17941">
    <property type="entry name" value="PP_kinase_C_1"/>
    <property type="match status" value="1"/>
</dbReference>
<dbReference type="Pfam" id="PF13089">
    <property type="entry name" value="PP_kinase_N"/>
    <property type="match status" value="1"/>
</dbReference>
<dbReference type="PIRSF" id="PIRSF015589">
    <property type="entry name" value="PP_kinase"/>
    <property type="match status" value="1"/>
</dbReference>
<dbReference type="SUPFAM" id="SSF56024">
    <property type="entry name" value="Phospholipase D/nuclease"/>
    <property type="match status" value="2"/>
</dbReference>
<dbReference type="SUPFAM" id="SSF143724">
    <property type="entry name" value="PHP14-like"/>
    <property type="match status" value="1"/>
</dbReference>
<dbReference type="SUPFAM" id="SSF140356">
    <property type="entry name" value="PPK N-terminal domain-like"/>
    <property type="match status" value="1"/>
</dbReference>
<accession>Q5HT53</accession>